<proteinExistence type="inferred from homology"/>
<name>GPDA_PSEPG</name>
<organism>
    <name type="scientific">Pseudomonas putida (strain GB-1)</name>
    <dbReference type="NCBI Taxonomy" id="76869"/>
    <lineage>
        <taxon>Bacteria</taxon>
        <taxon>Pseudomonadati</taxon>
        <taxon>Pseudomonadota</taxon>
        <taxon>Gammaproteobacteria</taxon>
        <taxon>Pseudomonadales</taxon>
        <taxon>Pseudomonadaceae</taxon>
        <taxon>Pseudomonas</taxon>
    </lineage>
</organism>
<feature type="chain" id="PRO_1000080312" description="Glycerol-3-phosphate dehydrogenase [NAD(P)+]">
    <location>
        <begin position="1"/>
        <end position="341"/>
    </location>
</feature>
<feature type="active site" description="Proton acceptor" evidence="1">
    <location>
        <position position="191"/>
    </location>
</feature>
<feature type="binding site" evidence="1">
    <location>
        <position position="14"/>
    </location>
    <ligand>
        <name>NADPH</name>
        <dbReference type="ChEBI" id="CHEBI:57783"/>
    </ligand>
</feature>
<feature type="binding site" evidence="1">
    <location>
        <position position="15"/>
    </location>
    <ligand>
        <name>NADPH</name>
        <dbReference type="ChEBI" id="CHEBI:57783"/>
    </ligand>
</feature>
<feature type="binding site" evidence="1">
    <location>
        <position position="35"/>
    </location>
    <ligand>
        <name>NADPH</name>
        <dbReference type="ChEBI" id="CHEBI:57783"/>
    </ligand>
</feature>
<feature type="binding site" evidence="1">
    <location>
        <position position="108"/>
    </location>
    <ligand>
        <name>NADPH</name>
        <dbReference type="ChEBI" id="CHEBI:57783"/>
    </ligand>
</feature>
<feature type="binding site" evidence="1">
    <location>
        <position position="108"/>
    </location>
    <ligand>
        <name>sn-glycerol 3-phosphate</name>
        <dbReference type="ChEBI" id="CHEBI:57597"/>
    </ligand>
</feature>
<feature type="binding site" evidence="1">
    <location>
        <position position="136"/>
    </location>
    <ligand>
        <name>sn-glycerol 3-phosphate</name>
        <dbReference type="ChEBI" id="CHEBI:57597"/>
    </ligand>
</feature>
<feature type="binding site" evidence="1">
    <location>
        <position position="140"/>
    </location>
    <ligand>
        <name>NADPH</name>
        <dbReference type="ChEBI" id="CHEBI:57783"/>
    </ligand>
</feature>
<feature type="binding site" evidence="1">
    <location>
        <position position="191"/>
    </location>
    <ligand>
        <name>sn-glycerol 3-phosphate</name>
        <dbReference type="ChEBI" id="CHEBI:57597"/>
    </ligand>
</feature>
<feature type="binding site" evidence="1">
    <location>
        <position position="244"/>
    </location>
    <ligand>
        <name>sn-glycerol 3-phosphate</name>
        <dbReference type="ChEBI" id="CHEBI:57597"/>
    </ligand>
</feature>
<feature type="binding site" evidence="1">
    <location>
        <position position="254"/>
    </location>
    <ligand>
        <name>sn-glycerol 3-phosphate</name>
        <dbReference type="ChEBI" id="CHEBI:57597"/>
    </ligand>
</feature>
<feature type="binding site" evidence="1">
    <location>
        <position position="255"/>
    </location>
    <ligand>
        <name>NADPH</name>
        <dbReference type="ChEBI" id="CHEBI:57783"/>
    </ligand>
</feature>
<feature type="binding site" evidence="1">
    <location>
        <position position="255"/>
    </location>
    <ligand>
        <name>sn-glycerol 3-phosphate</name>
        <dbReference type="ChEBI" id="CHEBI:57597"/>
    </ligand>
</feature>
<feature type="binding site" evidence="1">
    <location>
        <position position="256"/>
    </location>
    <ligand>
        <name>sn-glycerol 3-phosphate</name>
        <dbReference type="ChEBI" id="CHEBI:57597"/>
    </ligand>
</feature>
<feature type="binding site" evidence="1">
    <location>
        <position position="279"/>
    </location>
    <ligand>
        <name>NADPH</name>
        <dbReference type="ChEBI" id="CHEBI:57783"/>
    </ligand>
</feature>
<feature type="binding site" evidence="1">
    <location>
        <position position="281"/>
    </location>
    <ligand>
        <name>NADPH</name>
        <dbReference type="ChEBI" id="CHEBI:57783"/>
    </ligand>
</feature>
<reference key="1">
    <citation type="submission" date="2008-01" db="EMBL/GenBank/DDBJ databases">
        <title>Complete sequence of Pseudomonas putida GB-1.</title>
        <authorList>
            <consortium name="US DOE Joint Genome Institute"/>
            <person name="Copeland A."/>
            <person name="Lucas S."/>
            <person name="Lapidus A."/>
            <person name="Barry K."/>
            <person name="Glavina del Rio T."/>
            <person name="Dalin E."/>
            <person name="Tice H."/>
            <person name="Pitluck S."/>
            <person name="Bruce D."/>
            <person name="Goodwin L."/>
            <person name="Chertkov O."/>
            <person name="Brettin T."/>
            <person name="Detter J.C."/>
            <person name="Han C."/>
            <person name="Kuske C.R."/>
            <person name="Schmutz J."/>
            <person name="Larimer F."/>
            <person name="Land M."/>
            <person name="Hauser L."/>
            <person name="Kyrpides N."/>
            <person name="Kim E."/>
            <person name="McCarthy J.K."/>
            <person name="Richardson P."/>
        </authorList>
    </citation>
    <scope>NUCLEOTIDE SEQUENCE [LARGE SCALE GENOMIC DNA]</scope>
    <source>
        <strain>GB-1</strain>
    </source>
</reference>
<evidence type="ECO:0000255" key="1">
    <source>
        <dbReference type="HAMAP-Rule" id="MF_00394"/>
    </source>
</evidence>
<sequence>MTEQQPVAVLGGGSFGTAVANLLAENGVPVRQWMRDPAQAEAMRVNRENPRYLKGIRLHDGVEPVNDLLATLQASELVFVALPSSALRSVLAPHAELLRGKGLVSLTKGIEAQSFKLMSQILEEIAPQARIGVLSGPNLSREIAEHALTATVVASEDEKLCQQVQAVLHGRTFRVYASADRFGVELGGALKNVYAIIAGMAVALGMGENTKSMLITRALAEMTRFAVSQGANPMTFLGLAGVGDLIVTCSSPKSRNYQVGYALGEGHSLEEAVNRLGEVAEGVNTLKVLKAKAQEVQVYMPLVAGLHAILFEGRTLNQVIEHLMRAEPKTDVDFISISGFN</sequence>
<dbReference type="EC" id="1.1.1.94" evidence="1"/>
<dbReference type="EMBL" id="CP000926">
    <property type="protein sequence ID" value="ABY99631.1"/>
    <property type="molecule type" value="Genomic_DNA"/>
</dbReference>
<dbReference type="RefSeq" id="WP_012273336.1">
    <property type="nucleotide sequence ID" value="NC_010322.1"/>
</dbReference>
<dbReference type="SMR" id="B0KNV2"/>
<dbReference type="KEGG" id="ppg:PputGB1_3741"/>
<dbReference type="eggNOG" id="COG0240">
    <property type="taxonomic scope" value="Bacteria"/>
</dbReference>
<dbReference type="HOGENOM" id="CLU_033449_0_2_6"/>
<dbReference type="UniPathway" id="UPA00940"/>
<dbReference type="Proteomes" id="UP000002157">
    <property type="component" value="Chromosome"/>
</dbReference>
<dbReference type="GO" id="GO:0005829">
    <property type="term" value="C:cytosol"/>
    <property type="evidence" value="ECO:0007669"/>
    <property type="project" value="TreeGrafter"/>
</dbReference>
<dbReference type="GO" id="GO:0047952">
    <property type="term" value="F:glycerol-3-phosphate dehydrogenase [NAD(P)+] activity"/>
    <property type="evidence" value="ECO:0007669"/>
    <property type="project" value="UniProtKB-UniRule"/>
</dbReference>
<dbReference type="GO" id="GO:0051287">
    <property type="term" value="F:NAD binding"/>
    <property type="evidence" value="ECO:0007669"/>
    <property type="project" value="InterPro"/>
</dbReference>
<dbReference type="GO" id="GO:0005975">
    <property type="term" value="P:carbohydrate metabolic process"/>
    <property type="evidence" value="ECO:0007669"/>
    <property type="project" value="InterPro"/>
</dbReference>
<dbReference type="GO" id="GO:0046167">
    <property type="term" value="P:glycerol-3-phosphate biosynthetic process"/>
    <property type="evidence" value="ECO:0007669"/>
    <property type="project" value="UniProtKB-UniRule"/>
</dbReference>
<dbReference type="GO" id="GO:0046168">
    <property type="term" value="P:glycerol-3-phosphate catabolic process"/>
    <property type="evidence" value="ECO:0007669"/>
    <property type="project" value="InterPro"/>
</dbReference>
<dbReference type="GO" id="GO:0046474">
    <property type="term" value="P:glycerophospholipid biosynthetic process"/>
    <property type="evidence" value="ECO:0007669"/>
    <property type="project" value="TreeGrafter"/>
</dbReference>
<dbReference type="FunFam" id="1.10.1040.10:FF:000001">
    <property type="entry name" value="Glycerol-3-phosphate dehydrogenase [NAD(P)+]"/>
    <property type="match status" value="1"/>
</dbReference>
<dbReference type="FunFam" id="3.40.50.720:FF:000019">
    <property type="entry name" value="Glycerol-3-phosphate dehydrogenase [NAD(P)+]"/>
    <property type="match status" value="1"/>
</dbReference>
<dbReference type="Gene3D" id="1.10.1040.10">
    <property type="entry name" value="N-(1-d-carboxylethyl)-l-norvaline Dehydrogenase, domain 2"/>
    <property type="match status" value="1"/>
</dbReference>
<dbReference type="Gene3D" id="3.40.50.720">
    <property type="entry name" value="NAD(P)-binding Rossmann-like Domain"/>
    <property type="match status" value="1"/>
</dbReference>
<dbReference type="HAMAP" id="MF_00394">
    <property type="entry name" value="NAD_Glyc3P_dehydrog"/>
    <property type="match status" value="1"/>
</dbReference>
<dbReference type="InterPro" id="IPR008927">
    <property type="entry name" value="6-PGluconate_DH-like_C_sf"/>
</dbReference>
<dbReference type="InterPro" id="IPR013328">
    <property type="entry name" value="6PGD_dom2"/>
</dbReference>
<dbReference type="InterPro" id="IPR006168">
    <property type="entry name" value="G3P_DH_NAD-dep"/>
</dbReference>
<dbReference type="InterPro" id="IPR006109">
    <property type="entry name" value="G3P_DH_NAD-dep_C"/>
</dbReference>
<dbReference type="InterPro" id="IPR011128">
    <property type="entry name" value="G3P_DH_NAD-dep_N"/>
</dbReference>
<dbReference type="InterPro" id="IPR036291">
    <property type="entry name" value="NAD(P)-bd_dom_sf"/>
</dbReference>
<dbReference type="NCBIfam" id="NF000940">
    <property type="entry name" value="PRK00094.1-2"/>
    <property type="match status" value="1"/>
</dbReference>
<dbReference type="NCBIfam" id="NF000942">
    <property type="entry name" value="PRK00094.1-4"/>
    <property type="match status" value="1"/>
</dbReference>
<dbReference type="NCBIfam" id="NF000946">
    <property type="entry name" value="PRK00094.2-4"/>
    <property type="match status" value="1"/>
</dbReference>
<dbReference type="PANTHER" id="PTHR11728">
    <property type="entry name" value="GLYCEROL-3-PHOSPHATE DEHYDROGENASE"/>
    <property type="match status" value="1"/>
</dbReference>
<dbReference type="PANTHER" id="PTHR11728:SF1">
    <property type="entry name" value="GLYCEROL-3-PHOSPHATE DEHYDROGENASE [NAD(+)] 2, CHLOROPLASTIC"/>
    <property type="match status" value="1"/>
</dbReference>
<dbReference type="Pfam" id="PF07479">
    <property type="entry name" value="NAD_Gly3P_dh_C"/>
    <property type="match status" value="1"/>
</dbReference>
<dbReference type="Pfam" id="PF01210">
    <property type="entry name" value="NAD_Gly3P_dh_N"/>
    <property type="match status" value="1"/>
</dbReference>
<dbReference type="PIRSF" id="PIRSF000114">
    <property type="entry name" value="Glycerol-3-P_dh"/>
    <property type="match status" value="1"/>
</dbReference>
<dbReference type="PRINTS" id="PR00077">
    <property type="entry name" value="GPDHDRGNASE"/>
</dbReference>
<dbReference type="SUPFAM" id="SSF48179">
    <property type="entry name" value="6-phosphogluconate dehydrogenase C-terminal domain-like"/>
    <property type="match status" value="1"/>
</dbReference>
<dbReference type="SUPFAM" id="SSF51735">
    <property type="entry name" value="NAD(P)-binding Rossmann-fold domains"/>
    <property type="match status" value="1"/>
</dbReference>
<dbReference type="PROSITE" id="PS00957">
    <property type="entry name" value="NAD_G3PDH"/>
    <property type="match status" value="1"/>
</dbReference>
<gene>
    <name evidence="1" type="primary">gpsA</name>
    <name type="ordered locus">PputGB1_3741</name>
</gene>
<protein>
    <recommendedName>
        <fullName evidence="1">Glycerol-3-phosphate dehydrogenase [NAD(P)+]</fullName>
        <ecNumber evidence="1">1.1.1.94</ecNumber>
    </recommendedName>
    <alternativeName>
        <fullName evidence="1">NAD(P)(+)-dependent glycerol-3-phosphate dehydrogenase</fullName>
    </alternativeName>
    <alternativeName>
        <fullName evidence="1">NAD(P)H-dependent dihydroxyacetone-phosphate reductase</fullName>
    </alternativeName>
</protein>
<accession>B0KNV2</accession>
<comment type="function">
    <text evidence="1">Catalyzes the reduction of the glycolytic intermediate dihydroxyacetone phosphate (DHAP) to sn-glycerol 3-phosphate (G3P), the key precursor for phospholipid synthesis.</text>
</comment>
<comment type="catalytic activity">
    <reaction evidence="1">
        <text>sn-glycerol 3-phosphate + NAD(+) = dihydroxyacetone phosphate + NADH + H(+)</text>
        <dbReference type="Rhea" id="RHEA:11092"/>
        <dbReference type="ChEBI" id="CHEBI:15378"/>
        <dbReference type="ChEBI" id="CHEBI:57540"/>
        <dbReference type="ChEBI" id="CHEBI:57597"/>
        <dbReference type="ChEBI" id="CHEBI:57642"/>
        <dbReference type="ChEBI" id="CHEBI:57945"/>
        <dbReference type="EC" id="1.1.1.94"/>
    </reaction>
    <physiologicalReaction direction="right-to-left" evidence="1">
        <dbReference type="Rhea" id="RHEA:11094"/>
    </physiologicalReaction>
</comment>
<comment type="catalytic activity">
    <reaction evidence="1">
        <text>sn-glycerol 3-phosphate + NADP(+) = dihydroxyacetone phosphate + NADPH + H(+)</text>
        <dbReference type="Rhea" id="RHEA:11096"/>
        <dbReference type="ChEBI" id="CHEBI:15378"/>
        <dbReference type="ChEBI" id="CHEBI:57597"/>
        <dbReference type="ChEBI" id="CHEBI:57642"/>
        <dbReference type="ChEBI" id="CHEBI:57783"/>
        <dbReference type="ChEBI" id="CHEBI:58349"/>
        <dbReference type="EC" id="1.1.1.94"/>
    </reaction>
    <physiologicalReaction direction="right-to-left" evidence="1">
        <dbReference type="Rhea" id="RHEA:11098"/>
    </physiologicalReaction>
</comment>
<comment type="pathway">
    <text evidence="1">Membrane lipid metabolism; glycerophospholipid metabolism.</text>
</comment>
<comment type="subcellular location">
    <subcellularLocation>
        <location evidence="1">Cytoplasm</location>
    </subcellularLocation>
</comment>
<comment type="similarity">
    <text evidence="1">Belongs to the NAD-dependent glycerol-3-phosphate dehydrogenase family.</text>
</comment>
<keyword id="KW-0963">Cytoplasm</keyword>
<keyword id="KW-0444">Lipid biosynthesis</keyword>
<keyword id="KW-0443">Lipid metabolism</keyword>
<keyword id="KW-0520">NAD</keyword>
<keyword id="KW-0521">NADP</keyword>
<keyword id="KW-0547">Nucleotide-binding</keyword>
<keyword id="KW-0560">Oxidoreductase</keyword>
<keyword id="KW-0594">Phospholipid biosynthesis</keyword>
<keyword id="KW-1208">Phospholipid metabolism</keyword>